<gene>
    <name evidence="1" type="primary">pth</name>
    <name type="ordered locus">Dde_2128</name>
</gene>
<reference key="1">
    <citation type="journal article" date="2011" name="J. Bacteriol.">
        <title>Complete genome sequence and updated annotation of Desulfovibrio alaskensis G20.</title>
        <authorList>
            <person name="Hauser L.J."/>
            <person name="Land M.L."/>
            <person name="Brown S.D."/>
            <person name="Larimer F."/>
            <person name="Keller K.L."/>
            <person name="Rapp-Giles B.J."/>
            <person name="Price M.N."/>
            <person name="Lin M."/>
            <person name="Bruce D.C."/>
            <person name="Detter J.C."/>
            <person name="Tapia R."/>
            <person name="Han C.S."/>
            <person name="Goodwin L.A."/>
            <person name="Cheng J.F."/>
            <person name="Pitluck S."/>
            <person name="Copeland A."/>
            <person name="Lucas S."/>
            <person name="Nolan M."/>
            <person name="Lapidus A.L."/>
            <person name="Palumbo A.V."/>
            <person name="Wall J.D."/>
        </authorList>
    </citation>
    <scope>NUCLEOTIDE SEQUENCE [LARGE SCALE GENOMIC DNA]</scope>
    <source>
        <strain>ATCC BAA-1058 / DSM 17464 / G20</strain>
    </source>
</reference>
<feature type="chain" id="PRO_0000264033" description="Peptidyl-tRNA hydrolase">
    <location>
        <begin position="1"/>
        <end position="201"/>
    </location>
</feature>
<feature type="active site" description="Proton acceptor" evidence="1">
    <location>
        <position position="22"/>
    </location>
</feature>
<feature type="binding site" evidence="1">
    <location>
        <position position="17"/>
    </location>
    <ligand>
        <name>tRNA</name>
        <dbReference type="ChEBI" id="CHEBI:17843"/>
    </ligand>
</feature>
<feature type="binding site" evidence="1">
    <location>
        <position position="76"/>
    </location>
    <ligand>
        <name>tRNA</name>
        <dbReference type="ChEBI" id="CHEBI:17843"/>
    </ligand>
</feature>
<feature type="binding site" evidence="1">
    <location>
        <position position="78"/>
    </location>
    <ligand>
        <name>tRNA</name>
        <dbReference type="ChEBI" id="CHEBI:17843"/>
    </ligand>
</feature>
<feature type="binding site" evidence="1">
    <location>
        <position position="124"/>
    </location>
    <ligand>
        <name>tRNA</name>
        <dbReference type="ChEBI" id="CHEBI:17843"/>
    </ligand>
</feature>
<feature type="site" description="Discriminates between blocked and unblocked aminoacyl-tRNA" evidence="1">
    <location>
        <position position="12"/>
    </location>
</feature>
<feature type="site" description="Stabilizes the basic form of H active site to accept a proton" evidence="1">
    <location>
        <position position="103"/>
    </location>
</feature>
<protein>
    <recommendedName>
        <fullName evidence="1">Peptidyl-tRNA hydrolase</fullName>
        <shortName evidence="1">Pth</shortName>
        <ecNumber evidence="1">3.1.1.29</ecNumber>
    </recommendedName>
</protein>
<name>PTH_OLEA2</name>
<organism>
    <name type="scientific">Oleidesulfovibrio alaskensis (strain ATCC BAA-1058 / DSM 17464 / G20)</name>
    <name type="common">Desulfovibrio alaskensis</name>
    <dbReference type="NCBI Taxonomy" id="207559"/>
    <lineage>
        <taxon>Bacteria</taxon>
        <taxon>Pseudomonadati</taxon>
        <taxon>Thermodesulfobacteriota</taxon>
        <taxon>Desulfovibrionia</taxon>
        <taxon>Desulfovibrionales</taxon>
        <taxon>Desulfovibrionaceae</taxon>
        <taxon>Oleidesulfovibrio</taxon>
    </lineage>
</organism>
<accession>Q30ZH1</accession>
<sequence>MNLDGLIVGLGNPGKEYENTRHNLGFMLADALLDEVRRTAPHAVTSLGTGKKKYDLWKCAPLTGGSSWLVAKPLTFMNRSGDAVAHICGFYRIPPEKILVLHDELDLPLGRMKFKTAGGLAGHNGLKSIAERTGSKDFHRLRLGIGKPQSGQTTGYVLGRFGKDEQALVEKVLQAGVEGIRIFAQQGAVAATQFINAQDIQ</sequence>
<proteinExistence type="inferred from homology"/>
<keyword id="KW-0963">Cytoplasm</keyword>
<keyword id="KW-0378">Hydrolase</keyword>
<keyword id="KW-1185">Reference proteome</keyword>
<keyword id="KW-0694">RNA-binding</keyword>
<keyword id="KW-0820">tRNA-binding</keyword>
<dbReference type="EC" id="3.1.1.29" evidence="1"/>
<dbReference type="EMBL" id="CP000112">
    <property type="protein sequence ID" value="ABB38925.1"/>
    <property type="molecule type" value="Genomic_DNA"/>
</dbReference>
<dbReference type="RefSeq" id="WP_011368028.1">
    <property type="nucleotide sequence ID" value="NC_007519.1"/>
</dbReference>
<dbReference type="SMR" id="Q30ZH1"/>
<dbReference type="STRING" id="207559.Dde_2128"/>
<dbReference type="KEGG" id="dde:Dde_2128"/>
<dbReference type="eggNOG" id="COG0193">
    <property type="taxonomic scope" value="Bacteria"/>
</dbReference>
<dbReference type="HOGENOM" id="CLU_062456_3_1_7"/>
<dbReference type="Proteomes" id="UP000002710">
    <property type="component" value="Chromosome"/>
</dbReference>
<dbReference type="GO" id="GO:0005737">
    <property type="term" value="C:cytoplasm"/>
    <property type="evidence" value="ECO:0007669"/>
    <property type="project" value="UniProtKB-SubCell"/>
</dbReference>
<dbReference type="GO" id="GO:0004045">
    <property type="term" value="F:peptidyl-tRNA hydrolase activity"/>
    <property type="evidence" value="ECO:0007669"/>
    <property type="project" value="UniProtKB-UniRule"/>
</dbReference>
<dbReference type="GO" id="GO:0000049">
    <property type="term" value="F:tRNA binding"/>
    <property type="evidence" value="ECO:0007669"/>
    <property type="project" value="UniProtKB-UniRule"/>
</dbReference>
<dbReference type="GO" id="GO:0006515">
    <property type="term" value="P:protein quality control for misfolded or incompletely synthesized proteins"/>
    <property type="evidence" value="ECO:0007669"/>
    <property type="project" value="UniProtKB-UniRule"/>
</dbReference>
<dbReference type="GO" id="GO:0072344">
    <property type="term" value="P:rescue of stalled ribosome"/>
    <property type="evidence" value="ECO:0007669"/>
    <property type="project" value="UniProtKB-UniRule"/>
</dbReference>
<dbReference type="CDD" id="cd00462">
    <property type="entry name" value="PTH"/>
    <property type="match status" value="1"/>
</dbReference>
<dbReference type="FunFam" id="3.40.50.1470:FF:000001">
    <property type="entry name" value="Peptidyl-tRNA hydrolase"/>
    <property type="match status" value="1"/>
</dbReference>
<dbReference type="Gene3D" id="3.40.50.1470">
    <property type="entry name" value="Peptidyl-tRNA hydrolase"/>
    <property type="match status" value="1"/>
</dbReference>
<dbReference type="HAMAP" id="MF_00083">
    <property type="entry name" value="Pept_tRNA_hydro_bact"/>
    <property type="match status" value="1"/>
</dbReference>
<dbReference type="InterPro" id="IPR001328">
    <property type="entry name" value="Pept_tRNA_hydro"/>
</dbReference>
<dbReference type="InterPro" id="IPR018171">
    <property type="entry name" value="Pept_tRNA_hydro_CS"/>
</dbReference>
<dbReference type="InterPro" id="IPR036416">
    <property type="entry name" value="Pept_tRNA_hydro_sf"/>
</dbReference>
<dbReference type="NCBIfam" id="TIGR00447">
    <property type="entry name" value="pth"/>
    <property type="match status" value="1"/>
</dbReference>
<dbReference type="PANTHER" id="PTHR17224">
    <property type="entry name" value="PEPTIDYL-TRNA HYDROLASE"/>
    <property type="match status" value="1"/>
</dbReference>
<dbReference type="PANTHER" id="PTHR17224:SF1">
    <property type="entry name" value="PEPTIDYL-TRNA HYDROLASE"/>
    <property type="match status" value="1"/>
</dbReference>
<dbReference type="Pfam" id="PF01195">
    <property type="entry name" value="Pept_tRNA_hydro"/>
    <property type="match status" value="1"/>
</dbReference>
<dbReference type="SUPFAM" id="SSF53178">
    <property type="entry name" value="Peptidyl-tRNA hydrolase-like"/>
    <property type="match status" value="1"/>
</dbReference>
<dbReference type="PROSITE" id="PS01195">
    <property type="entry name" value="PEPT_TRNA_HYDROL_1"/>
    <property type="match status" value="1"/>
</dbReference>
<dbReference type="PROSITE" id="PS01196">
    <property type="entry name" value="PEPT_TRNA_HYDROL_2"/>
    <property type="match status" value="1"/>
</dbReference>
<evidence type="ECO:0000255" key="1">
    <source>
        <dbReference type="HAMAP-Rule" id="MF_00083"/>
    </source>
</evidence>
<comment type="function">
    <text evidence="1">Hydrolyzes ribosome-free peptidyl-tRNAs (with 1 or more amino acids incorporated), which drop off the ribosome during protein synthesis, or as a result of ribosome stalling.</text>
</comment>
<comment type="function">
    <text evidence="1">Catalyzes the release of premature peptidyl moieties from peptidyl-tRNA molecules trapped in stalled 50S ribosomal subunits, and thus maintains levels of free tRNAs and 50S ribosomes.</text>
</comment>
<comment type="catalytic activity">
    <reaction evidence="1">
        <text>an N-acyl-L-alpha-aminoacyl-tRNA + H2O = an N-acyl-L-amino acid + a tRNA + H(+)</text>
        <dbReference type="Rhea" id="RHEA:54448"/>
        <dbReference type="Rhea" id="RHEA-COMP:10123"/>
        <dbReference type="Rhea" id="RHEA-COMP:13883"/>
        <dbReference type="ChEBI" id="CHEBI:15377"/>
        <dbReference type="ChEBI" id="CHEBI:15378"/>
        <dbReference type="ChEBI" id="CHEBI:59874"/>
        <dbReference type="ChEBI" id="CHEBI:78442"/>
        <dbReference type="ChEBI" id="CHEBI:138191"/>
        <dbReference type="EC" id="3.1.1.29"/>
    </reaction>
</comment>
<comment type="subunit">
    <text evidence="1">Monomer.</text>
</comment>
<comment type="subcellular location">
    <subcellularLocation>
        <location evidence="1">Cytoplasm</location>
    </subcellularLocation>
</comment>
<comment type="similarity">
    <text evidence="1">Belongs to the PTH family.</text>
</comment>